<feature type="chain" id="PRO_0000162606" description="Period circadian protein">
    <location>
        <begin position="1" status="less than"/>
        <end position="66" status="greater than"/>
    </location>
</feature>
<feature type="repeat" description="1">
    <location>
        <begin position="30"/>
        <end position="31"/>
    </location>
</feature>
<feature type="repeat" description="2">
    <location>
        <begin position="32"/>
        <end position="33"/>
    </location>
</feature>
<feature type="repeat" description="3">
    <location>
        <begin position="35"/>
        <end position="36"/>
    </location>
</feature>
<feature type="repeat" description="4">
    <location>
        <begin position="37"/>
        <end position="38"/>
    </location>
</feature>
<feature type="region of interest" description="Disordered" evidence="2">
    <location>
        <begin position="1"/>
        <end position="66"/>
    </location>
</feature>
<feature type="region of interest" description="4 X 2 AA tandem repeats of G-[TN]">
    <location>
        <begin position="30"/>
        <end position="53"/>
    </location>
</feature>
<feature type="compositionally biased region" description="Low complexity" evidence="2">
    <location>
        <begin position="9"/>
        <end position="31"/>
    </location>
</feature>
<feature type="compositionally biased region" description="Gly residues" evidence="2">
    <location>
        <begin position="32"/>
        <end position="51"/>
    </location>
</feature>
<feature type="non-terminal residue">
    <location>
        <position position="1"/>
    </location>
</feature>
<feature type="non-terminal residue">
    <location>
        <position position="66"/>
    </location>
</feature>
<reference key="1">
    <citation type="journal article" date="1993" name="Mol. Biol. Evol.">
        <title>Molecular evolution of a repetitive region within the per gene of Drosophila.</title>
        <authorList>
            <person name="Peixoto A.A."/>
            <person name="Campesan S."/>
            <person name="Costa R.H."/>
            <person name="Kyriacou C.P."/>
        </authorList>
    </citation>
    <scope>NUCLEOTIDE SEQUENCE [GENOMIC DNA]</scope>
</reference>
<sequence>EGSGGSGSSGNFTTGSNIHMSSVTNTSNAGTGTSGTGNSGGGSGGGTGPGSGAIPPVTLTESLLNK</sequence>
<gene>
    <name type="primary">per</name>
</gene>
<organism>
    <name type="scientific">Drosophila saltans</name>
    <name type="common">Fruit fly</name>
    <dbReference type="NCBI Taxonomy" id="7273"/>
    <lineage>
        <taxon>Eukaryota</taxon>
        <taxon>Metazoa</taxon>
        <taxon>Ecdysozoa</taxon>
        <taxon>Arthropoda</taxon>
        <taxon>Hexapoda</taxon>
        <taxon>Insecta</taxon>
        <taxon>Pterygota</taxon>
        <taxon>Neoptera</taxon>
        <taxon>Endopterygota</taxon>
        <taxon>Diptera</taxon>
        <taxon>Brachycera</taxon>
        <taxon>Muscomorpha</taxon>
        <taxon>Ephydroidea</taxon>
        <taxon>Drosophilidae</taxon>
        <taxon>Drosophila</taxon>
        <taxon>Sophophora</taxon>
    </lineage>
</organism>
<protein>
    <recommendedName>
        <fullName>Period circadian protein</fullName>
    </recommendedName>
</protein>
<name>PER_DROSA</name>
<keyword id="KW-0090">Biological rhythms</keyword>
<keyword id="KW-0963">Cytoplasm</keyword>
<keyword id="KW-0539">Nucleus</keyword>
<keyword id="KW-0597">Phosphoprotein</keyword>
<keyword id="KW-0677">Repeat</keyword>
<proteinExistence type="inferred from homology"/>
<evidence type="ECO:0000250" key="1"/>
<evidence type="ECO:0000256" key="2">
    <source>
        <dbReference type="SAM" id="MobiDB-lite"/>
    </source>
</evidence>
<comment type="function">
    <text evidence="1">Essential for biological clock functions. Determines the period length of circadian and ultradian rhythms; an increase in PER dosage leads to shortened circadian rhythms and a decrease leads to lengthened circadian rhythms. Essential for the circadian rhythmicity of locomotor activity, eclosion behavior, and for the rhythmic component of the male courtship song that originates in the thoracic nervous system. The biological cycle depends on the rhythmic formation and nuclear localization of the TIM-PER complex. Light induces the degradation of TIM, which promotes elimination of PER. Nuclear activity of the heterodimer coordinatively regulates PER and TIM transcription through a negative feedback loop. Behaves as a negative element in circadian transcriptional loop. Does not appear to bind DNA, suggesting indirect transcriptional inhibition (By similarity).</text>
</comment>
<comment type="subunit">
    <text evidence="1">Forms a heterodimer with timeless (TIM); the complex then translocates into the nucleus.</text>
</comment>
<comment type="subcellular location">
    <subcellularLocation>
        <location evidence="1">Nucleus</location>
    </subcellularLocation>
    <subcellularLocation>
        <location evidence="1">Cytoplasm</location>
        <location evidence="1">Perinuclear region</location>
    </subcellularLocation>
    <text evidence="1">Nuclear at specific periods of the day. First accumulates in the perinuclear region about one hour before translocation into the nucleus. Interaction with Tim is required for nuclear localization (By similarity).</text>
</comment>
<comment type="domain">
    <text evidence="1">The run of Gly-Thr is implicated in the maintenance of circadian period at different temperatures. Deletion of the repeat leads to a shortening of the courtship song cycle period, and thus could be important for determining features of species-specific mating behavior (By similarity).</text>
</comment>
<comment type="PTM">
    <text evidence="1">Phosphorylated with a circadian rhythmicity, probably by the double-time protein (dbt). Phosphorylation could be implicated in the stability of per monomer and in the formation of heterodimer per-tim (By similarity).</text>
</comment>
<accession>Q04536</accession>
<dbReference type="EMBL" id="L06336">
    <property type="protein sequence ID" value="AAA28759.1"/>
    <property type="molecule type" value="Genomic_DNA"/>
</dbReference>
<dbReference type="GO" id="GO:0005634">
    <property type="term" value="C:nucleus"/>
    <property type="evidence" value="ECO:0007669"/>
    <property type="project" value="UniProtKB-SubCell"/>
</dbReference>
<dbReference type="GO" id="GO:0048471">
    <property type="term" value="C:perinuclear region of cytoplasm"/>
    <property type="evidence" value="ECO:0007669"/>
    <property type="project" value="UniProtKB-SubCell"/>
</dbReference>
<dbReference type="GO" id="GO:0048511">
    <property type="term" value="P:rhythmic process"/>
    <property type="evidence" value="ECO:0007669"/>
    <property type="project" value="UniProtKB-KW"/>
</dbReference>